<name>VSPA_SOYBN</name>
<gene>
    <name type="primary">VSPA</name>
</gene>
<sequence length="254" mass="29065">MKMKVLVFFVATILVAWQCHAYDMFPLRMNTGYGARTPEVKCASWRLAVEAHNIFGFETIPEECVEATKEYIHGEQYRSDSKTVNQQAYFYARDLEVHPKDTFVFSIDGTVLSNIPYYKKHGYGVEKFNSTLYDEWVNKGNAPALPETLKNYNKLVSLGFKIIFLSGRTLDKQAVTEANLKKAGYHTWEKLILKDPQDPSTPNAVSYKTAAREKLIRQGYNIVGIIGDQWSDLLGGHRGESRTFKLPNPLYYIQ</sequence>
<keyword id="KW-0325">Glycoprotein</keyword>
<keyword id="KW-1185">Reference proteome</keyword>
<keyword id="KW-0708">Seed storage protein</keyword>
<keyword id="KW-0732">Signal</keyword>
<keyword id="KW-0758">Storage protein</keyword>
<evidence type="ECO:0000255" key="1"/>
<evidence type="ECO:0000305" key="2"/>
<organism>
    <name type="scientific">Glycine max</name>
    <name type="common">Soybean</name>
    <name type="synonym">Glycine hispida</name>
    <dbReference type="NCBI Taxonomy" id="3847"/>
    <lineage>
        <taxon>Eukaryota</taxon>
        <taxon>Viridiplantae</taxon>
        <taxon>Streptophyta</taxon>
        <taxon>Embryophyta</taxon>
        <taxon>Tracheophyta</taxon>
        <taxon>Spermatophyta</taxon>
        <taxon>Magnoliopsida</taxon>
        <taxon>eudicotyledons</taxon>
        <taxon>Gunneridae</taxon>
        <taxon>Pentapetalae</taxon>
        <taxon>rosids</taxon>
        <taxon>fabids</taxon>
        <taxon>Fabales</taxon>
        <taxon>Fabaceae</taxon>
        <taxon>Papilionoideae</taxon>
        <taxon>50 kb inversion clade</taxon>
        <taxon>NPAAA clade</taxon>
        <taxon>indigoferoid/millettioid clade</taxon>
        <taxon>Phaseoleae</taxon>
        <taxon>Glycine</taxon>
        <taxon>Glycine subgen. Soja</taxon>
    </lineage>
</organism>
<comment type="function">
    <text>May function as somatic storage protein during early seedling development.</text>
</comment>
<comment type="tissue specificity">
    <text>Accumulates in the stems of developing soybean seedlings.</text>
</comment>
<comment type="similarity">
    <text evidence="2">Belongs to the APS1/VSP family.</text>
</comment>
<dbReference type="EMBL" id="M37530">
    <property type="protein sequence ID" value="AAA33937.1"/>
    <property type="molecule type" value="mRNA"/>
</dbReference>
<dbReference type="EMBL" id="M76981">
    <property type="protein sequence ID" value="AAA33967.1"/>
    <property type="molecule type" value="Genomic_DNA"/>
</dbReference>
<dbReference type="PIR" id="A45504">
    <property type="entry name" value="A45504"/>
</dbReference>
<dbReference type="PIR" id="S08511">
    <property type="entry name" value="S08511"/>
</dbReference>
<dbReference type="RefSeq" id="NP_001238459.1">
    <property type="nucleotide sequence ID" value="NM_001251530.2"/>
</dbReference>
<dbReference type="SMR" id="P15490"/>
<dbReference type="STRING" id="3847.P15490"/>
<dbReference type="GlyCosmos" id="P15490">
    <property type="glycosylation" value="1 site, No reported glycans"/>
</dbReference>
<dbReference type="PaxDb" id="3847-GLYMA07G01730.1"/>
<dbReference type="EnsemblPlants" id="KRH47195">
    <property type="protein sequence ID" value="KRH47195"/>
    <property type="gene ID" value="GLYMA_07G014500"/>
</dbReference>
<dbReference type="GeneID" id="547821"/>
<dbReference type="Gramene" id="KRH47195">
    <property type="protein sequence ID" value="KRH47195"/>
    <property type="gene ID" value="GLYMA_07G014500"/>
</dbReference>
<dbReference type="KEGG" id="gmx:547821"/>
<dbReference type="eggNOG" id="ENOG502QU6T">
    <property type="taxonomic scope" value="Eukaryota"/>
</dbReference>
<dbReference type="HOGENOM" id="CLU_053338_1_1_1"/>
<dbReference type="InParanoid" id="P15490"/>
<dbReference type="OMA" id="QTIPERC"/>
<dbReference type="OrthoDB" id="59415at2759"/>
<dbReference type="Proteomes" id="UP000008827">
    <property type="component" value="Chromosome 7"/>
</dbReference>
<dbReference type="GO" id="GO:0045735">
    <property type="term" value="F:nutrient reservoir activity"/>
    <property type="evidence" value="ECO:0007669"/>
    <property type="project" value="UniProtKB-KW"/>
</dbReference>
<dbReference type="CDD" id="cd07535">
    <property type="entry name" value="HAD_VSP"/>
    <property type="match status" value="1"/>
</dbReference>
<dbReference type="Gene3D" id="3.40.50.1000">
    <property type="entry name" value="HAD superfamily/HAD-like"/>
    <property type="match status" value="1"/>
</dbReference>
<dbReference type="InterPro" id="IPR005519">
    <property type="entry name" value="Acid_phosphat_B-like"/>
</dbReference>
<dbReference type="InterPro" id="IPR014403">
    <property type="entry name" value="APS1/VSP"/>
</dbReference>
<dbReference type="InterPro" id="IPR036412">
    <property type="entry name" value="HAD-like_sf"/>
</dbReference>
<dbReference type="InterPro" id="IPR023214">
    <property type="entry name" value="HAD_sf"/>
</dbReference>
<dbReference type="InterPro" id="IPR011267">
    <property type="entry name" value="Veg_Stor_Prot"/>
</dbReference>
<dbReference type="NCBIfam" id="TIGR01680">
    <property type="entry name" value="Veg_Stor_Prot"/>
    <property type="match status" value="1"/>
</dbReference>
<dbReference type="PANTHER" id="PTHR31284">
    <property type="entry name" value="ACID PHOSPHATASE-LIKE PROTEIN"/>
    <property type="match status" value="1"/>
</dbReference>
<dbReference type="PANTHER" id="PTHR31284:SF19">
    <property type="entry name" value="VEGETATIVE STORAGE PROTEIN 1-RELATED"/>
    <property type="match status" value="1"/>
</dbReference>
<dbReference type="Pfam" id="PF03767">
    <property type="entry name" value="Acid_phosphat_B"/>
    <property type="match status" value="1"/>
</dbReference>
<dbReference type="PIRSF" id="PIRSF002674">
    <property type="entry name" value="VSP"/>
    <property type="match status" value="1"/>
</dbReference>
<dbReference type="SUPFAM" id="SSF56784">
    <property type="entry name" value="HAD-like"/>
    <property type="match status" value="1"/>
</dbReference>
<reference key="1">
    <citation type="journal article" date="1988" name="Plant Mol. Biol.">
        <title>Proteins homologous to leaf glycoproteins are abundant in stems of darkgrown soybean seedlings. Analysis of proteins and cDNAs.</title>
        <authorList>
            <person name="Mason H.S."/>
            <person name="Guerrero F.D."/>
            <person name="Boyer J.S."/>
            <person name="Mullet J.E."/>
        </authorList>
        <dbReference type="AGRICOLA" id="IND91035200"/>
    </citation>
    <scope>NUCLEOTIDE SEQUENCE</scope>
    <source>
        <strain>cv. Williams 82</strain>
    </source>
</reference>
<reference key="2">
    <citation type="submission" date="1991-09" db="EMBL/GenBank/DDBJ databases">
        <authorList>
            <person name="Rhee Y."/>
            <person name="Staswick P.E."/>
        </authorList>
    </citation>
    <scope>NUCLEOTIDE SEQUENCE</scope>
</reference>
<protein>
    <recommendedName>
        <fullName>Stem 28 kDa glycoprotein</fullName>
    </recommendedName>
    <alternativeName>
        <fullName>Vegetative storage protein A</fullName>
    </alternativeName>
</protein>
<accession>P15490</accession>
<proteinExistence type="evidence at transcript level"/>
<feature type="signal peptide" evidence="1">
    <location>
        <begin position="1"/>
        <end position="21"/>
    </location>
</feature>
<feature type="propeptide" id="PRO_0000023989">
    <location>
        <begin position="22"/>
        <end position="34"/>
    </location>
</feature>
<feature type="chain" id="PRO_0000023990" description="Stem 28 kDa glycoprotein">
    <location>
        <begin position="35"/>
        <end position="254"/>
    </location>
</feature>
<feature type="glycosylation site" description="N-linked (GlcNAc...) asparagine" evidence="1">
    <location>
        <position position="129"/>
    </location>
</feature>